<evidence type="ECO:0000250" key="1"/>
<evidence type="ECO:0000250" key="2">
    <source>
        <dbReference type="UniProtKB" id="P05089"/>
    </source>
</evidence>
<evidence type="ECO:0000250" key="3">
    <source>
        <dbReference type="UniProtKB" id="P53608"/>
    </source>
</evidence>
<evidence type="ECO:0000250" key="4">
    <source>
        <dbReference type="UniProtKB" id="P78540"/>
    </source>
</evidence>
<evidence type="ECO:0000255" key="5"/>
<evidence type="ECO:0000255" key="6">
    <source>
        <dbReference type="PROSITE-ProRule" id="PRU00742"/>
    </source>
</evidence>
<evidence type="ECO:0000269" key="7">
    <source>
    </source>
</evidence>
<evidence type="ECO:0000269" key="8">
    <source>
    </source>
</evidence>
<evidence type="ECO:0000269" key="9">
    <source>
    </source>
</evidence>
<evidence type="ECO:0000269" key="10">
    <source>
    </source>
</evidence>
<evidence type="ECO:0000269" key="11">
    <source>
    </source>
</evidence>
<evidence type="ECO:0000269" key="12">
    <source>
    </source>
</evidence>
<proteinExistence type="evidence at protein level"/>
<dbReference type="EC" id="3.5.3.1" evidence="2"/>
<dbReference type="EMBL" id="U90886">
    <property type="protein sequence ID" value="AAC22548.1"/>
    <property type="molecule type" value="mRNA"/>
</dbReference>
<dbReference type="EMBL" id="AF032466">
    <property type="protein sequence ID" value="AAB86959.1"/>
    <property type="molecule type" value="mRNA"/>
</dbReference>
<dbReference type="EMBL" id="AF045965">
    <property type="protein sequence ID" value="AAC78460.1"/>
    <property type="molecule type" value="Genomic_DNA"/>
</dbReference>
<dbReference type="EMBL" id="AF044680">
    <property type="protein sequence ID" value="AAC78460.1"/>
    <property type="status" value="JOINED"/>
    <property type="molecule type" value="Genomic_DNA"/>
</dbReference>
<dbReference type="EMBL" id="AF045959">
    <property type="protein sequence ID" value="AAC78460.1"/>
    <property type="status" value="JOINED"/>
    <property type="molecule type" value="Genomic_DNA"/>
</dbReference>
<dbReference type="EMBL" id="AF045960">
    <property type="protein sequence ID" value="AAC78460.1"/>
    <property type="status" value="JOINED"/>
    <property type="molecule type" value="Genomic_DNA"/>
</dbReference>
<dbReference type="EMBL" id="AF045961">
    <property type="protein sequence ID" value="AAC78460.1"/>
    <property type="status" value="JOINED"/>
    <property type="molecule type" value="Genomic_DNA"/>
</dbReference>
<dbReference type="EMBL" id="AF045962">
    <property type="protein sequence ID" value="AAC78460.1"/>
    <property type="status" value="JOINED"/>
    <property type="molecule type" value="Genomic_DNA"/>
</dbReference>
<dbReference type="EMBL" id="AF045963">
    <property type="protein sequence ID" value="AAC78460.1"/>
    <property type="status" value="JOINED"/>
    <property type="molecule type" value="Genomic_DNA"/>
</dbReference>
<dbReference type="EMBL" id="AF045964">
    <property type="protein sequence ID" value="AAC78460.1"/>
    <property type="status" value="JOINED"/>
    <property type="molecule type" value="Genomic_DNA"/>
</dbReference>
<dbReference type="CCDS" id="CCDS26007.1"/>
<dbReference type="RefSeq" id="NP_033835.1">
    <property type="nucleotide sequence ID" value="NM_009705.3"/>
</dbReference>
<dbReference type="SMR" id="O08691"/>
<dbReference type="BioGRID" id="198191">
    <property type="interactions" value="1"/>
</dbReference>
<dbReference type="FunCoup" id="O08691">
    <property type="interactions" value="988"/>
</dbReference>
<dbReference type="STRING" id="10090.ENSMUSP00000021550"/>
<dbReference type="iPTMnet" id="O08691"/>
<dbReference type="PhosphoSitePlus" id="O08691"/>
<dbReference type="REPRODUCTION-2DPAGE" id="O08691"/>
<dbReference type="PaxDb" id="10090-ENSMUSP00000021550"/>
<dbReference type="PeptideAtlas" id="O08691"/>
<dbReference type="ProteomicsDB" id="296415"/>
<dbReference type="Antibodypedia" id="1">
    <property type="antibodies" value="440 antibodies from 36 providers"/>
</dbReference>
<dbReference type="DNASU" id="11847"/>
<dbReference type="Ensembl" id="ENSMUST00000021550.7">
    <property type="protein sequence ID" value="ENSMUSP00000021550.7"/>
    <property type="gene ID" value="ENSMUSG00000021125.7"/>
</dbReference>
<dbReference type="GeneID" id="11847"/>
<dbReference type="KEGG" id="mmu:11847"/>
<dbReference type="UCSC" id="uc007nzv.2">
    <property type="organism name" value="mouse"/>
</dbReference>
<dbReference type="AGR" id="MGI:1330806"/>
<dbReference type="CTD" id="384"/>
<dbReference type="MGI" id="MGI:1330806">
    <property type="gene designation" value="Arg2"/>
</dbReference>
<dbReference type="VEuPathDB" id="HostDB:ENSMUSG00000021125"/>
<dbReference type="eggNOG" id="KOG2965">
    <property type="taxonomic scope" value="Eukaryota"/>
</dbReference>
<dbReference type="GeneTree" id="ENSGT00950000183195"/>
<dbReference type="HOGENOM" id="CLU_039478_6_0_1"/>
<dbReference type="InParanoid" id="O08691"/>
<dbReference type="OMA" id="YKEFRYA"/>
<dbReference type="OrthoDB" id="9992747at2759"/>
<dbReference type="PhylomeDB" id="O08691"/>
<dbReference type="TreeFam" id="TF300034"/>
<dbReference type="Reactome" id="R-MMU-70635">
    <property type="pathway name" value="Urea cycle"/>
</dbReference>
<dbReference type="Reactome" id="R-MMU-9837999">
    <property type="pathway name" value="Mitochondrial protein degradation"/>
</dbReference>
<dbReference type="UniPathway" id="UPA00158">
    <property type="reaction ID" value="UER00270"/>
</dbReference>
<dbReference type="BioGRID-ORCS" id="11847">
    <property type="hits" value="1 hit in 78 CRISPR screens"/>
</dbReference>
<dbReference type="ChiTaRS" id="Arg2">
    <property type="organism name" value="mouse"/>
</dbReference>
<dbReference type="PRO" id="PR:O08691"/>
<dbReference type="Proteomes" id="UP000000589">
    <property type="component" value="Chromosome 12"/>
</dbReference>
<dbReference type="RNAct" id="O08691">
    <property type="molecule type" value="protein"/>
</dbReference>
<dbReference type="Bgee" id="ENSMUSG00000021125">
    <property type="expression patterns" value="Expressed in small intestine Peyer's patch and 194 other cell types or tissues"/>
</dbReference>
<dbReference type="GO" id="GO:0005739">
    <property type="term" value="C:mitochondrion"/>
    <property type="evidence" value="ECO:0000314"/>
    <property type="project" value="UniProtKB"/>
</dbReference>
<dbReference type="GO" id="GO:0004053">
    <property type="term" value="F:arginase activity"/>
    <property type="evidence" value="ECO:0000266"/>
    <property type="project" value="MGI"/>
</dbReference>
<dbReference type="GO" id="GO:0046872">
    <property type="term" value="F:metal ion binding"/>
    <property type="evidence" value="ECO:0007669"/>
    <property type="project" value="UniProtKB-KW"/>
</dbReference>
<dbReference type="GO" id="GO:0002250">
    <property type="term" value="P:adaptive immune response"/>
    <property type="evidence" value="ECO:0007669"/>
    <property type="project" value="UniProtKB-KW"/>
</dbReference>
<dbReference type="GO" id="GO:0006525">
    <property type="term" value="P:arginine metabolic process"/>
    <property type="evidence" value="ECO:0007669"/>
    <property type="project" value="UniProtKB-KW"/>
</dbReference>
<dbReference type="GO" id="GO:0045087">
    <property type="term" value="P:innate immune response"/>
    <property type="evidence" value="ECO:0007669"/>
    <property type="project" value="UniProtKB-KW"/>
</dbReference>
<dbReference type="GO" id="GO:1905403">
    <property type="term" value="P:negative regulation of activated CD8-positive, alpha-beta T cell apoptotic process"/>
    <property type="evidence" value="ECO:0000315"/>
    <property type="project" value="UniProtKB"/>
</dbReference>
<dbReference type="GO" id="GO:2000562">
    <property type="term" value="P:negative regulation of CD4-positive, alpha-beta T cell proliferation"/>
    <property type="evidence" value="ECO:0000315"/>
    <property type="project" value="UniProtKB"/>
</dbReference>
<dbReference type="GO" id="GO:0071644">
    <property type="term" value="P:negative regulation of chemokine (C-C motif) ligand 4 production"/>
    <property type="evidence" value="ECO:0000315"/>
    <property type="project" value="UniProtKB"/>
</dbReference>
<dbReference type="GO" id="GO:0071650">
    <property type="term" value="P:negative regulation of chemokine (C-C motif) ligand 5 production"/>
    <property type="evidence" value="ECO:0000315"/>
    <property type="project" value="UniProtKB"/>
</dbReference>
<dbReference type="GO" id="GO:1900425">
    <property type="term" value="P:negative regulation of defense response to bacterium"/>
    <property type="evidence" value="ECO:0000315"/>
    <property type="project" value="UniProtKB"/>
</dbReference>
<dbReference type="GO" id="GO:0032696">
    <property type="term" value="P:negative regulation of interleukin-13 production"/>
    <property type="evidence" value="ECO:0000315"/>
    <property type="project" value="UniProtKB"/>
</dbReference>
<dbReference type="GO" id="GO:0032700">
    <property type="term" value="P:negative regulation of interleukin-17 production"/>
    <property type="evidence" value="ECO:0000315"/>
    <property type="project" value="UniProtKB"/>
</dbReference>
<dbReference type="GO" id="GO:0071641">
    <property type="term" value="P:negative regulation of macrophage inflammatory protein 1 alpha production"/>
    <property type="evidence" value="ECO:0000315"/>
    <property type="project" value="UniProtKB"/>
</dbReference>
<dbReference type="GO" id="GO:0032720">
    <property type="term" value="P:negative regulation of tumor necrosis factor production"/>
    <property type="evidence" value="ECO:0000315"/>
    <property type="project" value="UniProtKB"/>
</dbReference>
<dbReference type="GO" id="GO:0002829">
    <property type="term" value="P:negative regulation of type 2 immune response"/>
    <property type="evidence" value="ECO:0000315"/>
    <property type="project" value="UniProtKB"/>
</dbReference>
<dbReference type="GO" id="GO:2000774">
    <property type="term" value="P:positive regulation of cellular senescence"/>
    <property type="evidence" value="ECO:0007669"/>
    <property type="project" value="Ensembl"/>
</dbReference>
<dbReference type="GO" id="GO:0032651">
    <property type="term" value="P:regulation of interleukin-1 beta production"/>
    <property type="evidence" value="ECO:0000315"/>
    <property type="project" value="UniProtKB"/>
</dbReference>
<dbReference type="GO" id="GO:1903426">
    <property type="term" value="P:regulation of reactive oxygen species biosynthetic process"/>
    <property type="evidence" value="ECO:0000315"/>
    <property type="project" value="UniProtKB"/>
</dbReference>
<dbReference type="GO" id="GO:0006941">
    <property type="term" value="P:striated muscle contraction"/>
    <property type="evidence" value="ECO:0000315"/>
    <property type="project" value="MGI"/>
</dbReference>
<dbReference type="GO" id="GO:0000050">
    <property type="term" value="P:urea cycle"/>
    <property type="evidence" value="ECO:0007669"/>
    <property type="project" value="UniProtKB-UniPathway"/>
</dbReference>
<dbReference type="GO" id="GO:0001657">
    <property type="term" value="P:ureteric bud development"/>
    <property type="evidence" value="ECO:0000270"/>
    <property type="project" value="UniProtKB"/>
</dbReference>
<dbReference type="CDD" id="cd09989">
    <property type="entry name" value="Arginase"/>
    <property type="match status" value="1"/>
</dbReference>
<dbReference type="FunFam" id="3.40.800.10:FF:000008">
    <property type="entry name" value="Arginase"/>
    <property type="match status" value="1"/>
</dbReference>
<dbReference type="Gene3D" id="3.40.800.10">
    <property type="entry name" value="Ureohydrolase domain"/>
    <property type="match status" value="1"/>
</dbReference>
<dbReference type="InterPro" id="IPR014033">
    <property type="entry name" value="Arginase"/>
</dbReference>
<dbReference type="InterPro" id="IPR006035">
    <property type="entry name" value="Ureohydrolase"/>
</dbReference>
<dbReference type="InterPro" id="IPR023696">
    <property type="entry name" value="Ureohydrolase_dom_sf"/>
</dbReference>
<dbReference type="InterPro" id="IPR020855">
    <property type="entry name" value="Ureohydrolase_Mn_BS"/>
</dbReference>
<dbReference type="NCBIfam" id="TIGR01229">
    <property type="entry name" value="rocF_arginase"/>
    <property type="match status" value="1"/>
</dbReference>
<dbReference type="PANTHER" id="PTHR43782">
    <property type="entry name" value="ARGINASE"/>
    <property type="match status" value="1"/>
</dbReference>
<dbReference type="PANTHER" id="PTHR43782:SF4">
    <property type="entry name" value="ARGINASE-2, MITOCHONDRIAL"/>
    <property type="match status" value="1"/>
</dbReference>
<dbReference type="Pfam" id="PF00491">
    <property type="entry name" value="Arginase"/>
    <property type="match status" value="1"/>
</dbReference>
<dbReference type="PIRSF" id="PIRSF036979">
    <property type="entry name" value="Arginase"/>
    <property type="match status" value="1"/>
</dbReference>
<dbReference type="PRINTS" id="PR00116">
    <property type="entry name" value="ARGINASE"/>
</dbReference>
<dbReference type="SUPFAM" id="SSF52768">
    <property type="entry name" value="Arginase/deacetylase"/>
    <property type="match status" value="1"/>
</dbReference>
<dbReference type="PROSITE" id="PS01053">
    <property type="entry name" value="ARGINASE_1"/>
    <property type="match status" value="1"/>
</dbReference>
<dbReference type="PROSITE" id="PS51409">
    <property type="entry name" value="ARGINASE_2"/>
    <property type="match status" value="1"/>
</dbReference>
<reference key="1">
    <citation type="journal article" date="1998" name="Mol. Genet. Metab.">
        <title>Cloning and characterization of the mouse and rat type II arginase genes.</title>
        <authorList>
            <person name="Iyer R.K."/>
            <person name="Bando J.M."/>
            <person name="Jenkinson C.P."/>
            <person name="Vockley J.G."/>
            <person name="Kim P.S."/>
            <person name="Kern R.M."/>
            <person name="Cederbaum S.D."/>
            <person name="Grody W.W."/>
        </authorList>
    </citation>
    <scope>NUCLEOTIDE SEQUENCE [MRNA]</scope>
    <source>
        <strain>C57BL/6J</strain>
        <tissue>Kidney</tissue>
    </source>
</reference>
<reference key="2">
    <citation type="journal article" date="1998" name="Am. J. Physiol.">
        <title>Differential regulation of arginases and inducible nitric oxide synthase in murine macrophage cells.</title>
        <authorList>
            <person name="Morris S.M. Jr."/>
            <person name="Kepka-Lenhart D."/>
            <person name="Chen L.C."/>
        </authorList>
    </citation>
    <scope>NUCLEOTIDE SEQUENCE [MRNA]</scope>
    <source>
        <strain>C57BL/6J</strain>
        <tissue>Kidney</tissue>
    </source>
</reference>
<reference key="3">
    <citation type="journal article" date="1998" name="Mamm. Genome">
        <title>Structure of the murine arginase II gene.</title>
        <authorList>
            <person name="Shi O.U."/>
            <person name="Kepka-Lenhart D."/>
            <person name="Morris S.M. Jr."/>
            <person name="O'Brien W.E."/>
        </authorList>
    </citation>
    <scope>NUCLEOTIDE SEQUENCE [GENOMIC DNA]</scope>
    <source>
        <strain>129/Sv</strain>
    </source>
</reference>
<reference key="4">
    <citation type="submission" date="2009-01" db="UniProtKB">
        <authorList>
            <person name="Lubec G."/>
            <person name="Sunyer B."/>
            <person name="Chen W.-Q."/>
        </authorList>
    </citation>
    <scope>PROTEIN SEQUENCE OF 51-57</scope>
    <scope>IDENTIFICATION BY MASS SPECTROMETRY</scope>
    <source>
        <strain>OF1</strain>
        <tissue>Hippocampus</tissue>
    </source>
</reference>
<reference key="5">
    <citation type="journal article" date="2010" name="Cell">
        <title>A tissue-specific atlas of mouse protein phosphorylation and expression.</title>
        <authorList>
            <person name="Huttlin E.L."/>
            <person name="Jedrychowski M.P."/>
            <person name="Elias J.E."/>
            <person name="Goswami T."/>
            <person name="Rad R."/>
            <person name="Beausoleil S.A."/>
            <person name="Villen J."/>
            <person name="Haas W."/>
            <person name="Sowa M.E."/>
            <person name="Gygi S.P."/>
        </authorList>
    </citation>
    <scope>IDENTIFICATION BY MASS SPECTROMETRY [LARGE SCALE ANALYSIS]</scope>
    <source>
        <tissue>Kidney</tissue>
        <tissue>Pancreas</tissue>
    </source>
</reference>
<reference key="6">
    <citation type="journal article" date="2012" name="Aging Cell">
        <title>Positive crosstalk between arginase-II and S6K1 in vascular endothelial inflammation and aging.</title>
        <authorList>
            <person name="Yepuri G."/>
            <person name="Velagapudi S."/>
            <person name="Xiong Y."/>
            <person name="Rajapakse A.G."/>
            <person name="Montani J.P."/>
            <person name="Ming X.F."/>
            <person name="Yang Z."/>
        </authorList>
    </citation>
    <scope>FUNCTION</scope>
    <scope>MUTAGENESIS OF HIS-160</scope>
</reference>
<reference key="7">
    <citation type="journal article" date="2014" name="Autophagy">
        <title>ARG2 impairs endothelial autophagy through regulation of MTOR and PRKAA/AMPK signaling in advanced atherosclerosis.</title>
        <authorList>
            <person name="Xiong Y."/>
            <person name="Yepuri G."/>
            <person name="Forbiteh M."/>
            <person name="Yu Y."/>
            <person name="Montani J.P."/>
            <person name="Yang Z."/>
            <person name="Ming X.F."/>
        </authorList>
    </citation>
    <scope>FUNCTION</scope>
</reference>
<reference key="8">
    <citation type="journal article" date="2014" name="J. Immunol.">
        <title>Repression of arginase-2 expression in dendritic cells by microRNA-155 is critical for promoting T cell proliferation.</title>
        <authorList>
            <person name="Dunand-Sauthier I."/>
            <person name="Irla M."/>
            <person name="Carnesecchi S."/>
            <person name="Seguin-Estevez Q."/>
            <person name="Vejnar C.E."/>
            <person name="Zdobnov E.M."/>
            <person name="Santiago-Raber M.L."/>
            <person name="Reith W."/>
        </authorList>
    </citation>
    <scope>FUNCTION</scope>
    <scope>SUBCELLULAR LOCATION</scope>
</reference>
<reference key="9">
    <citation type="journal article" date="2016" name="Amino Acids">
        <title>Arginase 2 deletion leads to enhanced M1 macrophage activation and upregulated polyamine metabolism in response to Helicobacter pylori infection.</title>
        <authorList>
            <person name="Hardbower D.M."/>
            <person name="Asim M."/>
            <person name="Murray-Stewart T."/>
            <person name="Casero R.A. Jr."/>
            <person name="Verriere T."/>
            <person name="Lewis N.D."/>
            <person name="Chaturvedi R."/>
            <person name="Piazuelo M.B."/>
            <person name="Wilson K.T."/>
        </authorList>
    </citation>
    <scope>FUNCTION</scope>
</reference>
<reference key="10">
    <citation type="journal article" date="2016" name="Cell">
        <title>L-arginine modulates T cell metabolism and enhances survival and anti-tumor activity.</title>
        <authorList>
            <person name="Geiger R."/>
            <person name="Rieckmann J.C."/>
            <person name="Wolf T."/>
            <person name="Basso C."/>
            <person name="Feng Y."/>
            <person name="Fuhrer T."/>
            <person name="Kogadeeva M."/>
            <person name="Picotti P."/>
            <person name="Meissner F."/>
            <person name="Mann M."/>
            <person name="Zamboni N."/>
            <person name="Sallusto F."/>
            <person name="Lanzavecchia A."/>
        </authorList>
    </citation>
    <scope>FUNCTION</scope>
</reference>
<reference key="11">
    <citation type="journal article" date="2016" name="J. Clin. Invest.">
        <title>Increased mitochondrial arginine metabolism supports bioenergetics in asthma.</title>
        <authorList>
            <person name="Xu W."/>
            <person name="Ghosh S."/>
            <person name="Comhair S.A."/>
            <person name="Asosingh K."/>
            <person name="Janocha A.J."/>
            <person name="Mavrakis D.A."/>
            <person name="Bennett C.D."/>
            <person name="Gruca L.L."/>
            <person name="Graham B.B."/>
            <person name="Queisser K.A."/>
            <person name="Kao C.C."/>
            <person name="Wedes S.H."/>
            <person name="Petrich J.M."/>
            <person name="Tuder R.M."/>
            <person name="Kalhan S.C."/>
            <person name="Erzurum S.C."/>
        </authorList>
    </citation>
    <scope>FUNCTION</scope>
</reference>
<protein>
    <recommendedName>
        <fullName>Arginase-2, mitochondrial</fullName>
        <ecNumber evidence="2">3.5.3.1</ecNumber>
    </recommendedName>
    <alternativeName>
        <fullName>Arginase II</fullName>
    </alternativeName>
    <alternativeName>
        <fullName>Kidney-type arginase</fullName>
    </alternativeName>
    <alternativeName>
        <fullName>Non-hepatic arginase</fullName>
    </alternativeName>
    <alternativeName>
        <fullName>Type II arginase</fullName>
    </alternativeName>
</protein>
<keyword id="KW-1064">Adaptive immunity</keyword>
<keyword id="KW-0056">Arginine metabolism</keyword>
<keyword id="KW-0903">Direct protein sequencing</keyword>
<keyword id="KW-0378">Hydrolase</keyword>
<keyword id="KW-0391">Immunity</keyword>
<keyword id="KW-0399">Innate immunity</keyword>
<keyword id="KW-0464">Manganese</keyword>
<keyword id="KW-0479">Metal-binding</keyword>
<keyword id="KW-0496">Mitochondrion</keyword>
<keyword id="KW-1185">Reference proteome</keyword>
<keyword id="KW-0809">Transit peptide</keyword>
<keyword id="KW-0835">Urea cycle</keyword>
<sequence>MFLRSSASRLLHGQIPCVLTRSVHSVAIVGAPFSRGQKKLGVEYGPAAIREAGLLKRLSRLGCHLKDFGDLSFTNVPQDDPYNNLVVYPRSVGLANQELAEVVSRAVSGGYSCVTMGGDHSLAIGTIIGHARHRPDLCVIWVDAHADINTPLTTVSGNIHGQPLSFLIKELQDKVPQLPGFSWIKPCLSPPNIVYIGLRDVEPPEHFILKNYDIQYFSMREIDRLGIQKVMEQTFDRLIGKRQRPIHLSFDIDAFDPKLAPATGTPVVGGLTYREGVYITEEIHNTGLLSALDLVEVNPHLATSEEEAKATARLAVDVIASSFGQTREGGHIVYDHLPTPSSPHESENEECVRI</sequence>
<comment type="function">
    <text evidence="4 7 8 9 10 11 12">May play a role in the regulation of extra-urea cycle arginine metabolism and also in down-regulation of nitric oxide synthesis. Extrahepatic arginase functions to regulate L-arginine bioavailability to nitric oxid synthase (NOS). Arginine metabolism is a critical regulator of innate and adaptive immune responses. Seems to be involved in negative regulation of the survival capacity of activated CD4(+) and CD8(+) T cells (PubMed:25009204, PubMed:27745970). May suppress inflammation-related signaling in asthmatic airway epithelium (PubMed:27214549). May contribute to the immune evasion of H.pylori by restricting M1 macrophage activation and polyamine metabolism (PubMed:27074721). May play a role in promoting prenatal immune suppression (By similarity). Regulates RPS6KB1 signaling, which promotes endothelial cell senescence and inflammation and implicates NOS3/eNOS dysfunction (PubMed:22928666). Can inhibit endothelial autophagy independently of its enzymatic activity implicating mTORC2 signaling (PubMed:25484082). Involved in vascular smooth muscle cell senescence and apoptosis independently of its enzymatic activity (By similarity).</text>
</comment>
<comment type="catalytic activity">
    <reaction evidence="2">
        <text>L-arginine + H2O = urea + L-ornithine</text>
        <dbReference type="Rhea" id="RHEA:20569"/>
        <dbReference type="ChEBI" id="CHEBI:15377"/>
        <dbReference type="ChEBI" id="CHEBI:16199"/>
        <dbReference type="ChEBI" id="CHEBI:32682"/>
        <dbReference type="ChEBI" id="CHEBI:46911"/>
        <dbReference type="EC" id="3.5.3.1"/>
    </reaction>
</comment>
<comment type="cofactor">
    <cofactor evidence="6">
        <name>Mn(2+)</name>
        <dbReference type="ChEBI" id="CHEBI:29035"/>
    </cofactor>
    <text evidence="6">Binds 2 manganese ions per subunit.</text>
</comment>
<comment type="pathway">
    <text evidence="2">Nitrogen metabolism; urea cycle; L-ornithine and urea from L-arginine: step 1/1.</text>
</comment>
<comment type="subunit">
    <text evidence="4">Homotrimer.</text>
</comment>
<comment type="subcellular location">
    <subcellularLocation>
        <location evidence="8">Mitochondrion</location>
    </subcellularLocation>
</comment>
<comment type="similarity">
    <text evidence="6">Belongs to the arginase family.</text>
</comment>
<feature type="transit peptide" description="Mitochondrion" evidence="5">
    <location>
        <begin position="1"/>
        <end position="22"/>
    </location>
</feature>
<feature type="chain" id="PRO_0000002085" description="Arginase-2, mitochondrial">
    <location>
        <begin position="23"/>
        <end position="354"/>
    </location>
</feature>
<feature type="binding site" evidence="6">
    <location>
        <position position="120"/>
    </location>
    <ligand>
        <name>Mn(2+)</name>
        <dbReference type="ChEBI" id="CHEBI:29035"/>
        <label>1</label>
    </ligand>
</feature>
<feature type="binding site" evidence="6">
    <location>
        <position position="143"/>
    </location>
    <ligand>
        <name>Mn(2+)</name>
        <dbReference type="ChEBI" id="CHEBI:29035"/>
        <label>1</label>
    </ligand>
</feature>
<feature type="binding site" evidence="6">
    <location>
        <position position="143"/>
    </location>
    <ligand>
        <name>Mn(2+)</name>
        <dbReference type="ChEBI" id="CHEBI:29035"/>
        <label>2</label>
    </ligand>
</feature>
<feature type="binding site" evidence="2">
    <location>
        <begin position="145"/>
        <end position="149"/>
    </location>
    <ligand>
        <name>substrate</name>
    </ligand>
</feature>
<feature type="binding site" evidence="6">
    <location>
        <position position="145"/>
    </location>
    <ligand>
        <name>Mn(2+)</name>
        <dbReference type="ChEBI" id="CHEBI:29035"/>
        <label>2</label>
    </ligand>
</feature>
<feature type="binding site" evidence="6">
    <location>
        <position position="147"/>
    </location>
    <ligand>
        <name>Mn(2+)</name>
        <dbReference type="ChEBI" id="CHEBI:29035"/>
        <label>1</label>
    </ligand>
</feature>
<feature type="binding site" evidence="2">
    <location>
        <begin position="156"/>
        <end position="158"/>
    </location>
    <ligand>
        <name>substrate</name>
    </ligand>
</feature>
<feature type="binding site" evidence="1">
    <location>
        <position position="202"/>
    </location>
    <ligand>
        <name>substrate</name>
    </ligand>
</feature>
<feature type="binding site" evidence="6">
    <location>
        <position position="251"/>
    </location>
    <ligand>
        <name>Mn(2+)</name>
        <dbReference type="ChEBI" id="CHEBI:29035"/>
        <label>1</label>
    </ligand>
</feature>
<feature type="binding site" evidence="6">
    <location>
        <position position="251"/>
    </location>
    <ligand>
        <name>Mn(2+)</name>
        <dbReference type="ChEBI" id="CHEBI:29035"/>
        <label>2</label>
    </ligand>
</feature>
<feature type="binding site" evidence="6">
    <location>
        <position position="253"/>
    </location>
    <ligand>
        <name>Mn(2+)</name>
        <dbReference type="ChEBI" id="CHEBI:29035"/>
        <label>2</label>
    </ligand>
</feature>
<feature type="binding site" evidence="3">
    <location>
        <position position="265"/>
    </location>
    <ligand>
        <name>substrate</name>
    </ligand>
</feature>
<feature type="binding site" evidence="4">
    <location>
        <position position="296"/>
    </location>
    <ligand>
        <name>substrate</name>
    </ligand>
</feature>
<feature type="mutagenesis site" description="Catalytically inactive; defective in promoting NOS3/eNOS-uncoupling in endothelial cells.">
    <original>H</original>
    <variation>F</variation>
    <location>
        <position position="160"/>
    </location>
</feature>
<organism>
    <name type="scientific">Mus musculus</name>
    <name type="common">Mouse</name>
    <dbReference type="NCBI Taxonomy" id="10090"/>
    <lineage>
        <taxon>Eukaryota</taxon>
        <taxon>Metazoa</taxon>
        <taxon>Chordata</taxon>
        <taxon>Craniata</taxon>
        <taxon>Vertebrata</taxon>
        <taxon>Euteleostomi</taxon>
        <taxon>Mammalia</taxon>
        <taxon>Eutheria</taxon>
        <taxon>Euarchontoglires</taxon>
        <taxon>Glires</taxon>
        <taxon>Rodentia</taxon>
        <taxon>Myomorpha</taxon>
        <taxon>Muroidea</taxon>
        <taxon>Muridae</taxon>
        <taxon>Murinae</taxon>
        <taxon>Mus</taxon>
        <taxon>Mus</taxon>
    </lineage>
</organism>
<name>ARGI2_MOUSE</name>
<accession>O08691</accession>
<gene>
    <name type="primary">Arg2</name>
</gene>